<evidence type="ECO:0000250" key="1"/>
<evidence type="ECO:0000305" key="2"/>
<sequence>MREIVTITASHRANHLITQFFNGQERALHERDEQAGSDPSVFLHGTIDADGRTMSYEPRAVLWDAKGGSGALGRFQYWSQDDYADEEEPPRAAPGIEVVQTAARVRRSAYQRALDAGEAPPALTAAGARYWSDYGRMIYGQDSVQELAHWHHDVAAPSAPDFEALGQRRFDRYENGYEVFTEECARDFFDISLHRQLEQCDTLQGFNLVTETDNGWGGFMAALQEQLREEVPKVCYFGWGLNVDESGPRHPPRAGFQRQSNKLRATLAMLEQSDLYFPIRSEAADSLWEAGGWACHVLDSVNSAMCLEKSRTLRFMNQLADRLHSGDEQRNVVSLMSSGQRSYSYFADAPRHRSSRGDPHTFSRCRLLRGSHSPPETTLSVENLELIRTYAWRPADTIPETARNLHHIDLGVTEKCRDVFKNWYEMVAKQFRYDPDREELKERLGTLGAAYECGWYSDDDSGDDT</sequence>
<feature type="chain" id="PRO_0000285326" description="Protein DML1">
    <location>
        <begin position="1"/>
        <end position="465"/>
    </location>
</feature>
<keyword id="KW-0496">Mitochondrion</keyword>
<keyword id="KW-1185">Reference proteome</keyword>
<proteinExistence type="inferred from homology"/>
<accession>Q756C7</accession>
<dbReference type="EMBL" id="AE016818">
    <property type="protein sequence ID" value="AAS53020.1"/>
    <property type="molecule type" value="Genomic_DNA"/>
</dbReference>
<dbReference type="RefSeq" id="NP_985196.1">
    <property type="nucleotide sequence ID" value="NM_210550.2"/>
</dbReference>
<dbReference type="FunCoup" id="Q756C7">
    <property type="interactions" value="75"/>
</dbReference>
<dbReference type="STRING" id="284811.Q756C7"/>
<dbReference type="EnsemblFungi" id="AAS53020">
    <property type="protein sequence ID" value="AAS53020"/>
    <property type="gene ID" value="AGOS_AER340W"/>
</dbReference>
<dbReference type="GeneID" id="4621410"/>
<dbReference type="KEGG" id="ago:AGOS_AER340W"/>
<dbReference type="eggNOG" id="KOG2530">
    <property type="taxonomic scope" value="Eukaryota"/>
</dbReference>
<dbReference type="HOGENOM" id="CLU_022511_2_2_1"/>
<dbReference type="InParanoid" id="Q756C7"/>
<dbReference type="OMA" id="DNGWGGF"/>
<dbReference type="OrthoDB" id="271881at2759"/>
<dbReference type="Proteomes" id="UP000000591">
    <property type="component" value="Chromosome V"/>
</dbReference>
<dbReference type="GO" id="GO:0005737">
    <property type="term" value="C:cytoplasm"/>
    <property type="evidence" value="ECO:0000318"/>
    <property type="project" value="GO_Central"/>
</dbReference>
<dbReference type="GO" id="GO:0005739">
    <property type="term" value="C:mitochondrion"/>
    <property type="evidence" value="ECO:0000318"/>
    <property type="project" value="GO_Central"/>
</dbReference>
<dbReference type="GO" id="GO:0000002">
    <property type="term" value="P:mitochondrial genome maintenance"/>
    <property type="evidence" value="ECO:0007669"/>
    <property type="project" value="EnsemblFungi"/>
</dbReference>
<dbReference type="GO" id="GO:0007005">
    <property type="term" value="P:mitochondrion organization"/>
    <property type="evidence" value="ECO:0000318"/>
    <property type="project" value="GO_Central"/>
</dbReference>
<dbReference type="GO" id="GO:0006276">
    <property type="term" value="P:plasmid maintenance"/>
    <property type="evidence" value="ECO:0007669"/>
    <property type="project" value="EnsemblFungi"/>
</dbReference>
<dbReference type="Gene3D" id="3.40.50.1440">
    <property type="entry name" value="Tubulin/FtsZ, GTPase domain"/>
    <property type="match status" value="1"/>
</dbReference>
<dbReference type="InterPro" id="IPR049942">
    <property type="entry name" value="DML1/Misato"/>
</dbReference>
<dbReference type="InterPro" id="IPR029209">
    <property type="entry name" value="DML1/Misato_tubulin"/>
</dbReference>
<dbReference type="InterPro" id="IPR019605">
    <property type="entry name" value="Misato_II_tubulin-like"/>
</dbReference>
<dbReference type="InterPro" id="IPR036525">
    <property type="entry name" value="Tubulin/FtsZ_GTPase_sf"/>
</dbReference>
<dbReference type="PANTHER" id="PTHR13391">
    <property type="entry name" value="MITOCHONDRIAL DISTRIBUTION REGULATOR MISATO"/>
    <property type="match status" value="1"/>
</dbReference>
<dbReference type="PANTHER" id="PTHR13391:SF0">
    <property type="entry name" value="PROTEIN MISATO HOMOLOG 1"/>
    <property type="match status" value="1"/>
</dbReference>
<dbReference type="Pfam" id="PF10644">
    <property type="entry name" value="Misat_Tub_SegII"/>
    <property type="match status" value="1"/>
</dbReference>
<dbReference type="Pfam" id="PF14881">
    <property type="entry name" value="Tubulin_3"/>
    <property type="match status" value="1"/>
</dbReference>
<dbReference type="SUPFAM" id="SSF52490">
    <property type="entry name" value="Tubulin nucleotide-binding domain-like"/>
    <property type="match status" value="1"/>
</dbReference>
<protein>
    <recommendedName>
        <fullName>Protein DML1</fullName>
    </recommendedName>
</protein>
<comment type="function">
    <text evidence="1">Involved in the partitioning of the mitochondrial organelle and mitochondrial DNA (mtDNA) inheritance.</text>
</comment>
<comment type="subcellular location">
    <subcellularLocation>
        <location evidence="1">Mitochondrion</location>
    </subcellularLocation>
</comment>
<comment type="similarity">
    <text evidence="2">Belongs to the misato family.</text>
</comment>
<name>DML1_EREGS</name>
<organism>
    <name type="scientific">Eremothecium gossypii (strain ATCC 10895 / CBS 109.51 / FGSC 9923 / NRRL Y-1056)</name>
    <name type="common">Yeast</name>
    <name type="synonym">Ashbya gossypii</name>
    <dbReference type="NCBI Taxonomy" id="284811"/>
    <lineage>
        <taxon>Eukaryota</taxon>
        <taxon>Fungi</taxon>
        <taxon>Dikarya</taxon>
        <taxon>Ascomycota</taxon>
        <taxon>Saccharomycotina</taxon>
        <taxon>Saccharomycetes</taxon>
        <taxon>Saccharomycetales</taxon>
        <taxon>Saccharomycetaceae</taxon>
        <taxon>Eremothecium</taxon>
    </lineage>
</organism>
<gene>
    <name type="primary">DML1</name>
    <name type="ordered locus">AER340W</name>
</gene>
<reference key="1">
    <citation type="journal article" date="2004" name="Science">
        <title>The Ashbya gossypii genome as a tool for mapping the ancient Saccharomyces cerevisiae genome.</title>
        <authorList>
            <person name="Dietrich F.S."/>
            <person name="Voegeli S."/>
            <person name="Brachat S."/>
            <person name="Lerch A."/>
            <person name="Gates K."/>
            <person name="Steiner S."/>
            <person name="Mohr C."/>
            <person name="Poehlmann R."/>
            <person name="Luedi P."/>
            <person name="Choi S."/>
            <person name="Wing R.A."/>
            <person name="Flavier A."/>
            <person name="Gaffney T.D."/>
            <person name="Philippsen P."/>
        </authorList>
    </citation>
    <scope>NUCLEOTIDE SEQUENCE [LARGE SCALE GENOMIC DNA]</scope>
    <source>
        <strain>ATCC 10895 / CBS 109.51 / FGSC 9923 / NRRL Y-1056</strain>
    </source>
</reference>
<reference key="2">
    <citation type="journal article" date="2013" name="G3 (Bethesda)">
        <title>Genomes of Ashbya fungi isolated from insects reveal four mating-type loci, numerous translocations, lack of transposons, and distinct gene duplications.</title>
        <authorList>
            <person name="Dietrich F.S."/>
            <person name="Voegeli S."/>
            <person name="Kuo S."/>
            <person name="Philippsen P."/>
        </authorList>
    </citation>
    <scope>GENOME REANNOTATION</scope>
    <source>
        <strain>ATCC 10895 / CBS 109.51 / FGSC 9923 / NRRL Y-1056</strain>
    </source>
</reference>